<name>SCO2_DANRE</name>
<proteinExistence type="inferred from homology"/>
<comment type="function">
    <text evidence="1">Copper metallochaperone essential for the synthesis and maturation of cytochrome c oxidase subunit II (MT-CO2/COX2) by facilitating the incorporation of copper into the Cu(A) site of MT-CO2/COX2. Could also act as a thiol-disulfide oxidoreductase to regulate the redox state of the cysteines in SCO1 during maturation of MT-CO2/COX2.</text>
</comment>
<comment type="subunit">
    <text evidence="1">Homodimer.</text>
</comment>
<comment type="subcellular location">
    <subcellularLocation>
        <location evidence="1">Mitochondrion inner membrane</location>
        <topology evidence="2">Single-pass membrane protein</topology>
    </subcellularLocation>
</comment>
<comment type="similarity">
    <text evidence="4">Belongs to the SCO1/2 family.</text>
</comment>
<feature type="transit peptide" description="Mitochondrion" evidence="2">
    <location>
        <begin position="1"/>
        <end status="unknown"/>
    </location>
</feature>
<feature type="chain" id="PRO_0000354069" description="Protein SCO2 homolog, mitochondrial">
    <location>
        <begin status="unknown"/>
        <end position="279"/>
    </location>
</feature>
<feature type="topological domain" description="Mitochondrial matrix" evidence="1">
    <location>
        <begin status="unknown"/>
        <end position="72"/>
    </location>
</feature>
<feature type="transmembrane region" description="Helical" evidence="2">
    <location>
        <begin position="73"/>
        <end position="90"/>
    </location>
</feature>
<feature type="topological domain" description="Mitochondrial intermembrane" evidence="1">
    <location>
        <begin position="91"/>
        <end position="279"/>
    </location>
</feature>
<feature type="domain" description="Thioredoxin">
    <location>
        <begin position="97"/>
        <end position="271"/>
    </location>
</feature>
<feature type="binding site" evidence="1">
    <location>
        <position position="145"/>
    </location>
    <ligand>
        <name>Cu cation</name>
        <dbReference type="ChEBI" id="CHEBI:23378"/>
    </ligand>
</feature>
<feature type="binding site" evidence="1">
    <location>
        <position position="149"/>
    </location>
    <ligand>
        <name>Cu cation</name>
        <dbReference type="ChEBI" id="CHEBI:23378"/>
    </ligand>
</feature>
<feature type="binding site" evidence="1">
    <location>
        <position position="236"/>
    </location>
    <ligand>
        <name>Cu cation</name>
        <dbReference type="ChEBI" id="CHEBI:23378"/>
    </ligand>
</feature>
<feature type="disulfide bond" description="Redox-active" evidence="3">
    <location>
        <begin position="145"/>
        <end position="149"/>
    </location>
</feature>
<protein>
    <recommendedName>
        <fullName>Protein SCO2 homolog, mitochondrial</fullName>
    </recommendedName>
</protein>
<evidence type="ECO:0000250" key="1">
    <source>
        <dbReference type="UniProtKB" id="O43819"/>
    </source>
</evidence>
<evidence type="ECO:0000255" key="2"/>
<evidence type="ECO:0000255" key="3">
    <source>
        <dbReference type="PROSITE-ProRule" id="PRU00691"/>
    </source>
</evidence>
<evidence type="ECO:0000305" key="4"/>
<reference key="1">
    <citation type="journal article" date="2013" name="Nature">
        <title>The zebrafish reference genome sequence and its relationship to the human genome.</title>
        <authorList>
            <person name="Howe K."/>
            <person name="Clark M.D."/>
            <person name="Torroja C.F."/>
            <person name="Torrance J."/>
            <person name="Berthelot C."/>
            <person name="Muffato M."/>
            <person name="Collins J.E."/>
            <person name="Humphray S."/>
            <person name="McLaren K."/>
            <person name="Matthews L."/>
            <person name="McLaren S."/>
            <person name="Sealy I."/>
            <person name="Caccamo M."/>
            <person name="Churcher C."/>
            <person name="Scott C."/>
            <person name="Barrett J.C."/>
            <person name="Koch R."/>
            <person name="Rauch G.J."/>
            <person name="White S."/>
            <person name="Chow W."/>
            <person name="Kilian B."/>
            <person name="Quintais L.T."/>
            <person name="Guerra-Assuncao J.A."/>
            <person name="Zhou Y."/>
            <person name="Gu Y."/>
            <person name="Yen J."/>
            <person name="Vogel J.H."/>
            <person name="Eyre T."/>
            <person name="Redmond S."/>
            <person name="Banerjee R."/>
            <person name="Chi J."/>
            <person name="Fu B."/>
            <person name="Langley E."/>
            <person name="Maguire S.F."/>
            <person name="Laird G.K."/>
            <person name="Lloyd D."/>
            <person name="Kenyon E."/>
            <person name="Donaldson S."/>
            <person name="Sehra H."/>
            <person name="Almeida-King J."/>
            <person name="Loveland J."/>
            <person name="Trevanion S."/>
            <person name="Jones M."/>
            <person name="Quail M."/>
            <person name="Willey D."/>
            <person name="Hunt A."/>
            <person name="Burton J."/>
            <person name="Sims S."/>
            <person name="McLay K."/>
            <person name="Plumb B."/>
            <person name="Davis J."/>
            <person name="Clee C."/>
            <person name="Oliver K."/>
            <person name="Clark R."/>
            <person name="Riddle C."/>
            <person name="Elliot D."/>
            <person name="Threadgold G."/>
            <person name="Harden G."/>
            <person name="Ware D."/>
            <person name="Begum S."/>
            <person name="Mortimore B."/>
            <person name="Kerry G."/>
            <person name="Heath P."/>
            <person name="Phillimore B."/>
            <person name="Tracey A."/>
            <person name="Corby N."/>
            <person name="Dunn M."/>
            <person name="Johnson C."/>
            <person name="Wood J."/>
            <person name="Clark S."/>
            <person name="Pelan S."/>
            <person name="Griffiths G."/>
            <person name="Smith M."/>
            <person name="Glithero R."/>
            <person name="Howden P."/>
            <person name="Barker N."/>
            <person name="Lloyd C."/>
            <person name="Stevens C."/>
            <person name="Harley J."/>
            <person name="Holt K."/>
            <person name="Panagiotidis G."/>
            <person name="Lovell J."/>
            <person name="Beasley H."/>
            <person name="Henderson C."/>
            <person name="Gordon D."/>
            <person name="Auger K."/>
            <person name="Wright D."/>
            <person name="Collins J."/>
            <person name="Raisen C."/>
            <person name="Dyer L."/>
            <person name="Leung K."/>
            <person name="Robertson L."/>
            <person name="Ambridge K."/>
            <person name="Leongamornlert D."/>
            <person name="McGuire S."/>
            <person name="Gilderthorp R."/>
            <person name="Griffiths C."/>
            <person name="Manthravadi D."/>
            <person name="Nichol S."/>
            <person name="Barker G."/>
            <person name="Whitehead S."/>
            <person name="Kay M."/>
            <person name="Brown J."/>
            <person name="Murnane C."/>
            <person name="Gray E."/>
            <person name="Humphries M."/>
            <person name="Sycamore N."/>
            <person name="Barker D."/>
            <person name="Saunders D."/>
            <person name="Wallis J."/>
            <person name="Babbage A."/>
            <person name="Hammond S."/>
            <person name="Mashreghi-Mohammadi M."/>
            <person name="Barr L."/>
            <person name="Martin S."/>
            <person name="Wray P."/>
            <person name="Ellington A."/>
            <person name="Matthews N."/>
            <person name="Ellwood M."/>
            <person name="Woodmansey R."/>
            <person name="Clark G."/>
            <person name="Cooper J."/>
            <person name="Tromans A."/>
            <person name="Grafham D."/>
            <person name="Skuce C."/>
            <person name="Pandian R."/>
            <person name="Andrews R."/>
            <person name="Harrison E."/>
            <person name="Kimberley A."/>
            <person name="Garnett J."/>
            <person name="Fosker N."/>
            <person name="Hall R."/>
            <person name="Garner P."/>
            <person name="Kelly D."/>
            <person name="Bird C."/>
            <person name="Palmer S."/>
            <person name="Gehring I."/>
            <person name="Berger A."/>
            <person name="Dooley C.M."/>
            <person name="Ersan-Urun Z."/>
            <person name="Eser C."/>
            <person name="Geiger H."/>
            <person name="Geisler M."/>
            <person name="Karotki L."/>
            <person name="Kirn A."/>
            <person name="Konantz J."/>
            <person name="Konantz M."/>
            <person name="Oberlander M."/>
            <person name="Rudolph-Geiger S."/>
            <person name="Teucke M."/>
            <person name="Lanz C."/>
            <person name="Raddatz G."/>
            <person name="Osoegawa K."/>
            <person name="Zhu B."/>
            <person name="Rapp A."/>
            <person name="Widaa S."/>
            <person name="Langford C."/>
            <person name="Yang F."/>
            <person name="Schuster S.C."/>
            <person name="Carter N.P."/>
            <person name="Harrow J."/>
            <person name="Ning Z."/>
            <person name="Herrero J."/>
            <person name="Searle S.M."/>
            <person name="Enright A."/>
            <person name="Geisler R."/>
            <person name="Plasterk R.H."/>
            <person name="Lee C."/>
            <person name="Westerfield M."/>
            <person name="de Jong P.J."/>
            <person name="Zon L.I."/>
            <person name="Postlethwait J.H."/>
            <person name="Nusslein-Volhard C."/>
            <person name="Hubbard T.J."/>
            <person name="Roest Crollius H."/>
            <person name="Rogers J."/>
            <person name="Stemple D.L."/>
        </authorList>
    </citation>
    <scope>NUCLEOTIDE SEQUENCE [LARGE SCALE GENOMIC DNA]</scope>
    <source>
        <strain>Tuebingen</strain>
    </source>
</reference>
<dbReference type="EMBL" id="BX649398">
    <property type="protein sequence ID" value="CAI20823.1"/>
    <property type="molecule type" value="Genomic_DNA"/>
</dbReference>
<dbReference type="RefSeq" id="NP_001038697.1">
    <property type="nucleotide sequence ID" value="NM_001045232.1"/>
</dbReference>
<dbReference type="RefSeq" id="XP_005164828.1">
    <property type="nucleotide sequence ID" value="XM_005164771.5"/>
</dbReference>
<dbReference type="SMR" id="Q5RH02"/>
<dbReference type="FunCoup" id="Q5RH02">
    <property type="interactions" value="283"/>
</dbReference>
<dbReference type="STRING" id="7955.ENSDARP00000123722"/>
<dbReference type="PaxDb" id="7955-ENSDARP00000066987"/>
<dbReference type="Ensembl" id="ENSDART00000150221">
    <property type="protein sequence ID" value="ENSDARP00000123722"/>
    <property type="gene ID" value="ENSDARG00000045555"/>
</dbReference>
<dbReference type="Ensembl" id="ENSDART00000185200">
    <property type="protein sequence ID" value="ENSDARP00000149326"/>
    <property type="gene ID" value="ENSDARG00000045555"/>
</dbReference>
<dbReference type="GeneID" id="606683"/>
<dbReference type="KEGG" id="dre:606683"/>
<dbReference type="AGR" id="ZFIN:ZDB-GENE-041210-173"/>
<dbReference type="CTD" id="9997"/>
<dbReference type="ZFIN" id="ZDB-GENE-041210-173">
    <property type="gene designation" value="sco2"/>
</dbReference>
<dbReference type="eggNOG" id="KOG2792">
    <property type="taxonomic scope" value="Eukaryota"/>
</dbReference>
<dbReference type="HOGENOM" id="CLU_050131_0_3_1"/>
<dbReference type="InParanoid" id="Q5RH02"/>
<dbReference type="OMA" id="YYNRMKS"/>
<dbReference type="OrthoDB" id="76676at2759"/>
<dbReference type="PhylomeDB" id="Q5RH02"/>
<dbReference type="Reactome" id="R-DRE-9864848">
    <property type="pathway name" value="Complex IV assembly"/>
</dbReference>
<dbReference type="PRO" id="PR:Q5RH02"/>
<dbReference type="Proteomes" id="UP000000437">
    <property type="component" value="Chromosome 4"/>
</dbReference>
<dbReference type="Bgee" id="ENSDARG00000045555">
    <property type="expression patterns" value="Expressed in ovary and 22 other cell types or tissues"/>
</dbReference>
<dbReference type="GO" id="GO:0005743">
    <property type="term" value="C:mitochondrial inner membrane"/>
    <property type="evidence" value="ECO:0000250"/>
    <property type="project" value="UniProtKB"/>
</dbReference>
<dbReference type="GO" id="GO:0016531">
    <property type="term" value="F:copper chaperone activity"/>
    <property type="evidence" value="ECO:0007669"/>
    <property type="project" value="InterPro"/>
</dbReference>
<dbReference type="GO" id="GO:0005507">
    <property type="term" value="F:copper ion binding"/>
    <property type="evidence" value="ECO:0007669"/>
    <property type="project" value="InterPro"/>
</dbReference>
<dbReference type="GO" id="GO:0015035">
    <property type="term" value="F:protein-disulfide reductase activity"/>
    <property type="evidence" value="ECO:0000250"/>
    <property type="project" value="UniProtKB"/>
</dbReference>
<dbReference type="GO" id="GO:0001654">
    <property type="term" value="P:eye development"/>
    <property type="evidence" value="ECO:0000250"/>
    <property type="project" value="UniProtKB"/>
</dbReference>
<dbReference type="GO" id="GO:0006878">
    <property type="term" value="P:intracellular copper ion homeostasis"/>
    <property type="evidence" value="ECO:0007669"/>
    <property type="project" value="InterPro"/>
</dbReference>
<dbReference type="GO" id="GO:0033617">
    <property type="term" value="P:mitochondrial cytochrome c oxidase assembly"/>
    <property type="evidence" value="ECO:0000250"/>
    <property type="project" value="UniProtKB"/>
</dbReference>
<dbReference type="CDD" id="cd02968">
    <property type="entry name" value="SCO"/>
    <property type="match status" value="1"/>
</dbReference>
<dbReference type="FunFam" id="3.40.30.10:FF:000013">
    <property type="entry name" value="Blast:Protein SCO1 homolog, mitochondrial"/>
    <property type="match status" value="1"/>
</dbReference>
<dbReference type="Gene3D" id="3.40.30.10">
    <property type="entry name" value="Glutaredoxin"/>
    <property type="match status" value="1"/>
</dbReference>
<dbReference type="InterPro" id="IPR003782">
    <property type="entry name" value="SCO1/SenC"/>
</dbReference>
<dbReference type="InterPro" id="IPR017276">
    <property type="entry name" value="Synth_of_cyt-c-oxidase_Sco1/2"/>
</dbReference>
<dbReference type="InterPro" id="IPR036249">
    <property type="entry name" value="Thioredoxin-like_sf"/>
</dbReference>
<dbReference type="PANTHER" id="PTHR12151">
    <property type="entry name" value="ELECTRON TRANSPORT PROTIN SCO1/SENC FAMILY MEMBER"/>
    <property type="match status" value="1"/>
</dbReference>
<dbReference type="PANTHER" id="PTHR12151:SF2">
    <property type="entry name" value="PROTEIN SCO2 HOMOLOG, MITOCHONDRIAL"/>
    <property type="match status" value="1"/>
</dbReference>
<dbReference type="Pfam" id="PF02630">
    <property type="entry name" value="SCO1-SenC"/>
    <property type="match status" value="1"/>
</dbReference>
<dbReference type="PIRSF" id="PIRSF037736">
    <property type="entry name" value="SCO1"/>
    <property type="match status" value="1"/>
</dbReference>
<dbReference type="SUPFAM" id="SSF52833">
    <property type="entry name" value="Thioredoxin-like"/>
    <property type="match status" value="1"/>
</dbReference>
<organism>
    <name type="scientific">Danio rerio</name>
    <name type="common">Zebrafish</name>
    <name type="synonym">Brachydanio rerio</name>
    <dbReference type="NCBI Taxonomy" id="7955"/>
    <lineage>
        <taxon>Eukaryota</taxon>
        <taxon>Metazoa</taxon>
        <taxon>Chordata</taxon>
        <taxon>Craniata</taxon>
        <taxon>Vertebrata</taxon>
        <taxon>Euteleostomi</taxon>
        <taxon>Actinopterygii</taxon>
        <taxon>Neopterygii</taxon>
        <taxon>Teleostei</taxon>
        <taxon>Ostariophysi</taxon>
        <taxon>Cypriniformes</taxon>
        <taxon>Danionidae</taxon>
        <taxon>Danioninae</taxon>
        <taxon>Danio</taxon>
    </lineage>
</organism>
<accession>Q5RH02</accession>
<sequence>MLRLRVFDRHKRLWSVLQSTIRGNNISNHIPNTTCRSSAPPHLCARQRAFYSQNSPKTPNPGSSAGIKLRTRLVVTLLFGGGIIGTWWYVHQEKEKRIQMQRLEQLRKVALGQGDFHLLDHTGQRRTKRDFLGHWVLLYFGFTHCPDICPDELEKLTSVVHILDKDPSLPSVQPLFITVDPERDDVSAMARYVKDFHPRLVGLTGSAEEVKQAGRDFRVYASNGPKDEDGDYIVDHSIVIYLVNPDGLFIDYYNRMKNDTQIAESIRNHMKTFVRLFPD</sequence>
<gene>
    <name type="primary">sco2</name>
    <name type="ORF">si:dkey-202b22.3</name>
</gene>
<keyword id="KW-0143">Chaperone</keyword>
<keyword id="KW-0186">Copper</keyword>
<keyword id="KW-1015">Disulfide bond</keyword>
<keyword id="KW-0472">Membrane</keyword>
<keyword id="KW-0479">Metal-binding</keyword>
<keyword id="KW-0496">Mitochondrion</keyword>
<keyword id="KW-0999">Mitochondrion inner membrane</keyword>
<keyword id="KW-1185">Reference proteome</keyword>
<keyword id="KW-0809">Transit peptide</keyword>
<keyword id="KW-0812">Transmembrane</keyword>
<keyword id="KW-1133">Transmembrane helix</keyword>